<proteinExistence type="evidence at transcript level"/>
<sequence length="77" mass="8650">MKLMIFTGLVLFAIVSLIEAQAENEKPCLPEYKVRTHAPGNCCSDLVCDCYGRYKSGAQIGRNCFCLQKGVIYKREN</sequence>
<dbReference type="EMBL" id="EU926076">
    <property type="protein sequence ID" value="ACI41408.1"/>
    <property type="molecule type" value="mRNA"/>
</dbReference>
<dbReference type="EMBL" id="FM864080">
    <property type="protein sequence ID" value="CAS03677.1"/>
    <property type="molecule type" value="mRNA"/>
</dbReference>
<dbReference type="SMR" id="B6DCZ2"/>
<dbReference type="ArachnoServer" id="AS001015">
    <property type="toxin name" value="U8-lycotoxin-Ls1l"/>
</dbReference>
<dbReference type="GO" id="GO:0005576">
    <property type="term" value="C:extracellular region"/>
    <property type="evidence" value="ECO:0007669"/>
    <property type="project" value="UniProtKB-SubCell"/>
</dbReference>
<dbReference type="GO" id="GO:0090729">
    <property type="term" value="F:toxin activity"/>
    <property type="evidence" value="ECO:0007669"/>
    <property type="project" value="UniProtKB-KW"/>
</dbReference>
<dbReference type="InterPro" id="IPR019553">
    <property type="entry name" value="Spider_toxin_CSTX_knottin"/>
</dbReference>
<dbReference type="Pfam" id="PF10530">
    <property type="entry name" value="Toxin_35"/>
    <property type="match status" value="1"/>
</dbReference>
<comment type="subcellular location">
    <subcellularLocation>
        <location evidence="1">Secreted</location>
    </subcellularLocation>
</comment>
<comment type="tissue specificity">
    <text>Expressed by the venom gland.</text>
</comment>
<comment type="PTM">
    <text evidence="1">Contains 4 disulfide bonds.</text>
</comment>
<comment type="similarity">
    <text evidence="3">Belongs to the neurotoxin 19 (CSTX) family. 08 (U8-Lctx) subfamily.</text>
</comment>
<evidence type="ECO:0000250" key="1"/>
<evidence type="ECO:0000255" key="2"/>
<evidence type="ECO:0000305" key="3"/>
<feature type="signal peptide" evidence="2">
    <location>
        <begin position="1"/>
        <end position="20"/>
    </location>
</feature>
<feature type="propeptide" id="PRO_0000401803" evidence="1">
    <location>
        <begin position="21"/>
        <end position="26"/>
    </location>
</feature>
<feature type="chain" id="PRO_0000401804" description="U8-lycotoxin-Ls1l">
    <location>
        <begin position="27"/>
        <end position="77"/>
    </location>
</feature>
<keyword id="KW-1015">Disulfide bond</keyword>
<keyword id="KW-0964">Secreted</keyword>
<keyword id="KW-0732">Signal</keyword>
<keyword id="KW-0800">Toxin</keyword>
<reference key="1">
    <citation type="journal article" date="2010" name="Zoology">
        <title>Transcriptome analysis of the venom glands of the Chinese wolf spider Lycosa singoriensis.</title>
        <authorList>
            <person name="Zhang Y."/>
            <person name="Chen J."/>
            <person name="Tang X."/>
            <person name="Wang F."/>
            <person name="Jiang L."/>
            <person name="Xiong X."/>
            <person name="Wang M."/>
            <person name="Rong M."/>
            <person name="Liu Z."/>
            <person name="Liang S."/>
        </authorList>
    </citation>
    <scope>NUCLEOTIDE SEQUENCE [LARGE SCALE MRNA]</scope>
    <source>
        <tissue>Venom gland</tissue>
    </source>
</reference>
<organism>
    <name type="scientific">Lycosa singoriensis</name>
    <name type="common">Wolf spider</name>
    <name type="synonym">Aranea singoriensis</name>
    <dbReference type="NCBI Taxonomy" id="434756"/>
    <lineage>
        <taxon>Eukaryota</taxon>
        <taxon>Metazoa</taxon>
        <taxon>Ecdysozoa</taxon>
        <taxon>Arthropoda</taxon>
        <taxon>Chelicerata</taxon>
        <taxon>Arachnida</taxon>
        <taxon>Araneae</taxon>
        <taxon>Araneomorphae</taxon>
        <taxon>Entelegynae</taxon>
        <taxon>Lycosoidea</taxon>
        <taxon>Lycosidae</taxon>
        <taxon>Lycosa</taxon>
    </lineage>
</organism>
<name>TX821_LYCSI</name>
<protein>
    <recommendedName>
        <fullName>U8-lycotoxin-Ls1l</fullName>
    </recommendedName>
    <alternativeName>
        <fullName>Toxin-like structure LSTX-H21</fullName>
    </alternativeName>
</protein>
<accession>B6DCZ2</accession>